<gene>
    <name evidence="1" type="primary">znuC</name>
    <name type="ordered locus">PA5500</name>
</gene>
<protein>
    <recommendedName>
        <fullName evidence="1">Zinc import ATP-binding protein ZnuC</fullName>
        <ecNumber evidence="1">7.2.2.20</ecNumber>
    </recommendedName>
</protein>
<accession>Q9HT73</accession>
<evidence type="ECO:0000255" key="1">
    <source>
        <dbReference type="HAMAP-Rule" id="MF_01725"/>
    </source>
</evidence>
<comment type="function">
    <text evidence="1">Part of the ABC transporter complex ZnuABC involved in zinc import. Responsible for energy coupling to the transport system.</text>
</comment>
<comment type="catalytic activity">
    <reaction evidence="1">
        <text>Zn(2+)(out) + ATP(in) + H2O(in) = Zn(2+)(in) + ADP(in) + phosphate(in) + H(+)(in)</text>
        <dbReference type="Rhea" id="RHEA:29795"/>
        <dbReference type="ChEBI" id="CHEBI:15377"/>
        <dbReference type="ChEBI" id="CHEBI:15378"/>
        <dbReference type="ChEBI" id="CHEBI:29105"/>
        <dbReference type="ChEBI" id="CHEBI:30616"/>
        <dbReference type="ChEBI" id="CHEBI:43474"/>
        <dbReference type="ChEBI" id="CHEBI:456216"/>
        <dbReference type="EC" id="7.2.2.20"/>
    </reaction>
</comment>
<comment type="subunit">
    <text evidence="1">The complex is composed of two ATP-binding proteins (ZnuC), two transmembrane proteins (ZnuB) and a solute-binding protein (ZnuA).</text>
</comment>
<comment type="subcellular location">
    <subcellularLocation>
        <location evidence="1">Cell inner membrane</location>
        <topology evidence="1">Peripheral membrane protein</topology>
    </subcellularLocation>
</comment>
<comment type="similarity">
    <text evidence="1">Belongs to the ABC transporter superfamily. Zinc importer (TC 3.A.1.15.5) family.</text>
</comment>
<dbReference type="EC" id="7.2.2.20" evidence="1"/>
<dbReference type="EMBL" id="AE004091">
    <property type="protein sequence ID" value="AAG08885.1"/>
    <property type="molecule type" value="Genomic_DNA"/>
</dbReference>
<dbReference type="PIR" id="E82959">
    <property type="entry name" value="E82959"/>
</dbReference>
<dbReference type="RefSeq" id="NP_254187.1">
    <property type="nucleotide sequence ID" value="NC_002516.2"/>
</dbReference>
<dbReference type="RefSeq" id="WP_003114128.1">
    <property type="nucleotide sequence ID" value="NZ_QZGE01000012.1"/>
</dbReference>
<dbReference type="SMR" id="Q9HT73"/>
<dbReference type="FunCoup" id="Q9HT73">
    <property type="interactions" value="204"/>
</dbReference>
<dbReference type="STRING" id="208964.PA5500"/>
<dbReference type="PaxDb" id="208964-PA5500"/>
<dbReference type="DNASU" id="877853"/>
<dbReference type="GeneID" id="877853"/>
<dbReference type="KEGG" id="pae:PA5500"/>
<dbReference type="PATRIC" id="fig|208964.12.peg.5765"/>
<dbReference type="PseudoCAP" id="PA5500"/>
<dbReference type="HOGENOM" id="CLU_000604_1_11_6"/>
<dbReference type="InParanoid" id="Q9HT73"/>
<dbReference type="OrthoDB" id="9780942at2"/>
<dbReference type="PhylomeDB" id="Q9HT73"/>
<dbReference type="BioCyc" id="PAER208964:G1FZ6-5627-MONOMER"/>
<dbReference type="Proteomes" id="UP000002438">
    <property type="component" value="Chromosome"/>
</dbReference>
<dbReference type="GO" id="GO:0043190">
    <property type="term" value="C:ATP-binding cassette (ABC) transporter complex"/>
    <property type="evidence" value="ECO:0000318"/>
    <property type="project" value="GO_Central"/>
</dbReference>
<dbReference type="GO" id="GO:0015633">
    <property type="term" value="F:ABC-type zinc transporter activity"/>
    <property type="evidence" value="ECO:0007669"/>
    <property type="project" value="UniProtKB-EC"/>
</dbReference>
<dbReference type="GO" id="GO:0005524">
    <property type="term" value="F:ATP binding"/>
    <property type="evidence" value="ECO:0007669"/>
    <property type="project" value="UniProtKB-KW"/>
</dbReference>
<dbReference type="GO" id="GO:0016887">
    <property type="term" value="F:ATP hydrolysis activity"/>
    <property type="evidence" value="ECO:0007669"/>
    <property type="project" value="InterPro"/>
</dbReference>
<dbReference type="GO" id="GO:0042626">
    <property type="term" value="F:ATPase-coupled transmembrane transporter activity"/>
    <property type="evidence" value="ECO:0000318"/>
    <property type="project" value="GO_Central"/>
</dbReference>
<dbReference type="GO" id="GO:0010043">
    <property type="term" value="P:response to zinc ion"/>
    <property type="evidence" value="ECO:0000315"/>
    <property type="project" value="PseudoCAP"/>
</dbReference>
<dbReference type="CDD" id="cd03235">
    <property type="entry name" value="ABC_Metallic_Cations"/>
    <property type="match status" value="1"/>
</dbReference>
<dbReference type="FunFam" id="3.40.50.300:FF:000392">
    <property type="entry name" value="Zinc import ATP-binding protein ZnuC"/>
    <property type="match status" value="1"/>
</dbReference>
<dbReference type="Gene3D" id="3.40.50.300">
    <property type="entry name" value="P-loop containing nucleotide triphosphate hydrolases"/>
    <property type="match status" value="1"/>
</dbReference>
<dbReference type="InterPro" id="IPR003593">
    <property type="entry name" value="AAA+_ATPase"/>
</dbReference>
<dbReference type="InterPro" id="IPR003439">
    <property type="entry name" value="ABC_transporter-like_ATP-bd"/>
</dbReference>
<dbReference type="InterPro" id="IPR017871">
    <property type="entry name" value="ABC_transporter-like_CS"/>
</dbReference>
<dbReference type="InterPro" id="IPR050153">
    <property type="entry name" value="Metal_Ion_Import_ABC"/>
</dbReference>
<dbReference type="InterPro" id="IPR027417">
    <property type="entry name" value="P-loop_NTPase"/>
</dbReference>
<dbReference type="NCBIfam" id="NF007090">
    <property type="entry name" value="PRK09544.1"/>
    <property type="match status" value="1"/>
</dbReference>
<dbReference type="PANTHER" id="PTHR42734">
    <property type="entry name" value="METAL TRANSPORT SYSTEM ATP-BINDING PROTEIN TM_0124-RELATED"/>
    <property type="match status" value="1"/>
</dbReference>
<dbReference type="PANTHER" id="PTHR42734:SF9">
    <property type="entry name" value="ZINC IMPORT ATP-BINDING PROTEIN ZNUC"/>
    <property type="match status" value="1"/>
</dbReference>
<dbReference type="Pfam" id="PF00005">
    <property type="entry name" value="ABC_tran"/>
    <property type="match status" value="1"/>
</dbReference>
<dbReference type="SMART" id="SM00382">
    <property type="entry name" value="AAA"/>
    <property type="match status" value="1"/>
</dbReference>
<dbReference type="SUPFAM" id="SSF52540">
    <property type="entry name" value="P-loop containing nucleoside triphosphate hydrolases"/>
    <property type="match status" value="1"/>
</dbReference>
<dbReference type="PROSITE" id="PS00211">
    <property type="entry name" value="ABC_TRANSPORTER_1"/>
    <property type="match status" value="1"/>
</dbReference>
<dbReference type="PROSITE" id="PS50893">
    <property type="entry name" value="ABC_TRANSPORTER_2"/>
    <property type="match status" value="1"/>
</dbReference>
<dbReference type="PROSITE" id="PS51298">
    <property type="entry name" value="ZNUC"/>
    <property type="match status" value="1"/>
</dbReference>
<feature type="chain" id="PRO_0000281524" description="Zinc import ATP-binding protein ZnuC">
    <location>
        <begin position="1"/>
        <end position="269"/>
    </location>
</feature>
<feature type="domain" description="ABC transporter" evidence="1">
    <location>
        <begin position="6"/>
        <end position="221"/>
    </location>
</feature>
<feature type="binding site" evidence="1">
    <location>
        <begin position="38"/>
        <end position="45"/>
    </location>
    <ligand>
        <name>ATP</name>
        <dbReference type="ChEBI" id="CHEBI:30616"/>
    </ligand>
</feature>
<sequence length="269" mass="29156">MDNALVRLTQVGVSFNGQAVLSDVDLAIEPGQIVTLIGPNGAGKTTLVRSVLGLLKPHVGEVWRRPRLTIGYMPQKLHVDATLPLSVLRFLRLVPGVKREQALAALREVGAAHVLERPLQSISGGELQRVLLARALLRKPELLVLDEPVQGVDVAGQAELYRLIGKLRDRYGCGVLMVSHDLHLVMSATDQVVCLNRHVCCSGHPEQVSGDPAFVELFGQDARSLAIYHHHHDHAHDLHGEVVKAGPGALPPGTRFTPVHKHGPDCNHG</sequence>
<proteinExistence type="inferred from homology"/>
<name>ZNUC_PSEAE</name>
<organism>
    <name type="scientific">Pseudomonas aeruginosa (strain ATCC 15692 / DSM 22644 / CIP 104116 / JCM 14847 / LMG 12228 / 1C / PRS 101 / PAO1)</name>
    <dbReference type="NCBI Taxonomy" id="208964"/>
    <lineage>
        <taxon>Bacteria</taxon>
        <taxon>Pseudomonadati</taxon>
        <taxon>Pseudomonadota</taxon>
        <taxon>Gammaproteobacteria</taxon>
        <taxon>Pseudomonadales</taxon>
        <taxon>Pseudomonadaceae</taxon>
        <taxon>Pseudomonas</taxon>
    </lineage>
</organism>
<reference key="1">
    <citation type="journal article" date="2000" name="Nature">
        <title>Complete genome sequence of Pseudomonas aeruginosa PAO1, an opportunistic pathogen.</title>
        <authorList>
            <person name="Stover C.K."/>
            <person name="Pham X.-Q.T."/>
            <person name="Erwin A.L."/>
            <person name="Mizoguchi S.D."/>
            <person name="Warrener P."/>
            <person name="Hickey M.J."/>
            <person name="Brinkman F.S.L."/>
            <person name="Hufnagle W.O."/>
            <person name="Kowalik D.J."/>
            <person name="Lagrou M."/>
            <person name="Garber R.L."/>
            <person name="Goltry L."/>
            <person name="Tolentino E."/>
            <person name="Westbrock-Wadman S."/>
            <person name="Yuan Y."/>
            <person name="Brody L.L."/>
            <person name="Coulter S.N."/>
            <person name="Folger K.R."/>
            <person name="Kas A."/>
            <person name="Larbig K."/>
            <person name="Lim R.M."/>
            <person name="Smith K.A."/>
            <person name="Spencer D.H."/>
            <person name="Wong G.K.-S."/>
            <person name="Wu Z."/>
            <person name="Paulsen I.T."/>
            <person name="Reizer J."/>
            <person name="Saier M.H. Jr."/>
            <person name="Hancock R.E.W."/>
            <person name="Lory S."/>
            <person name="Olson M.V."/>
        </authorList>
    </citation>
    <scope>NUCLEOTIDE SEQUENCE [LARGE SCALE GENOMIC DNA]</scope>
    <source>
        <strain>ATCC 15692 / DSM 22644 / CIP 104116 / JCM 14847 / LMG 12228 / 1C / PRS 101 / PAO1</strain>
    </source>
</reference>
<keyword id="KW-0067">ATP-binding</keyword>
<keyword id="KW-0997">Cell inner membrane</keyword>
<keyword id="KW-1003">Cell membrane</keyword>
<keyword id="KW-0406">Ion transport</keyword>
<keyword id="KW-0472">Membrane</keyword>
<keyword id="KW-0547">Nucleotide-binding</keyword>
<keyword id="KW-1185">Reference proteome</keyword>
<keyword id="KW-1278">Translocase</keyword>
<keyword id="KW-0813">Transport</keyword>
<keyword id="KW-0862">Zinc</keyword>
<keyword id="KW-0864">Zinc transport</keyword>